<sequence length="14" mass="1508">LNLKALLAVAKKIL</sequence>
<proteinExistence type="evidence at protein level"/>
<comment type="function">
    <text evidence="1 2 3">Mast cell degranulating peptide (PubMed:6206053). Causes hemolysis of guinea pig erythrocytes (PubMed:6206053). Its mast cell degranulation activity may be related to the activation of G-protein coupled receptors in mast cells as well as interaction with other proteins located in cell endosomal membranes in the mast cells (By similarity).</text>
</comment>
<comment type="subcellular location">
    <subcellularLocation>
        <location evidence="3">Secreted</location>
    </subcellularLocation>
</comment>
<comment type="tissue specificity">
    <text evidence="6">Expressed by the venom gland.</text>
</comment>
<comment type="similarity">
    <text evidence="5">Belongs to the MCD family. Mastoparan subfamily.</text>
</comment>
<accession>P01516</accession>
<reference key="1">
    <citation type="journal article" date="1984" name="J. Biol. Chem.">
        <title>Isolation and characterization of two new peptides, mastoparan C and crabrolin, from the venom of the European hornet, Vespa crabro.</title>
        <authorList>
            <person name="Argiolas A."/>
            <person name="Pisano J.J."/>
        </authorList>
    </citation>
    <scope>PROTEIN SEQUENCE</scope>
    <scope>FUNCTION</scope>
    <scope>AMIDATION AT LEU-14</scope>
    <scope>SUBCELLULAR LOCATION</scope>
    <source>
        <tissue>Venom</tissue>
    </source>
</reference>
<name>MAST_VESCR</name>
<evidence type="ECO:0000250" key="1">
    <source>
        <dbReference type="UniProtKB" id="P01514"/>
    </source>
</evidence>
<evidence type="ECO:0000250" key="2">
    <source>
        <dbReference type="UniProtKB" id="P84914"/>
    </source>
</evidence>
<evidence type="ECO:0000269" key="3">
    <source>
    </source>
</evidence>
<evidence type="ECO:0000303" key="4">
    <source>
    </source>
</evidence>
<evidence type="ECO:0000305" key="5"/>
<evidence type="ECO:0000305" key="6">
    <source>
    </source>
</evidence>
<feature type="peptide" id="PRO_0000044059" description="Mastoparan-C" evidence="3">
    <location>
        <begin position="1"/>
        <end position="14"/>
    </location>
</feature>
<feature type="modified residue" description="Leucine amide" evidence="3">
    <location>
        <position position="14"/>
    </location>
</feature>
<dbReference type="PIR" id="A01779">
    <property type="entry name" value="QMVHP2"/>
</dbReference>
<dbReference type="TCDB" id="1.C.32.1.5">
    <property type="family name" value="the amphipathic peptide mastoparan (mastoparan) family"/>
</dbReference>
<dbReference type="GO" id="GO:0005576">
    <property type="term" value="C:extracellular region"/>
    <property type="evidence" value="ECO:0007669"/>
    <property type="project" value="UniProtKB-SubCell"/>
</dbReference>
<dbReference type="GO" id="GO:0090729">
    <property type="term" value="F:toxin activity"/>
    <property type="evidence" value="ECO:0007669"/>
    <property type="project" value="UniProtKB-KW"/>
</dbReference>
<dbReference type="InterPro" id="IPR013213">
    <property type="entry name" value="Mastoparan"/>
</dbReference>
<dbReference type="Pfam" id="PF08249">
    <property type="entry name" value="Mastoparan"/>
    <property type="match status" value="1"/>
</dbReference>
<keyword id="KW-0027">Amidation</keyword>
<keyword id="KW-0903">Direct protein sequencing</keyword>
<keyword id="KW-1213">G-protein coupled receptor impairing toxin</keyword>
<keyword id="KW-0467">Mast cell degranulation</keyword>
<keyword id="KW-0964">Secreted</keyword>
<keyword id="KW-0800">Toxin</keyword>
<organism>
    <name type="scientific">Vespa crabro</name>
    <name type="common">European hornet</name>
    <dbReference type="NCBI Taxonomy" id="7445"/>
    <lineage>
        <taxon>Eukaryota</taxon>
        <taxon>Metazoa</taxon>
        <taxon>Ecdysozoa</taxon>
        <taxon>Arthropoda</taxon>
        <taxon>Hexapoda</taxon>
        <taxon>Insecta</taxon>
        <taxon>Pterygota</taxon>
        <taxon>Neoptera</taxon>
        <taxon>Endopterygota</taxon>
        <taxon>Hymenoptera</taxon>
        <taxon>Apocrita</taxon>
        <taxon>Aculeata</taxon>
        <taxon>Vespoidea</taxon>
        <taxon>Vespidae</taxon>
        <taxon>Vespinae</taxon>
        <taxon>Vespa</taxon>
    </lineage>
</organism>
<protein>
    <recommendedName>
        <fullName evidence="4">Mastoparan-C</fullName>
        <shortName evidence="6">MP-C</shortName>
    </recommendedName>
</protein>